<protein>
    <recommendedName>
        <fullName>ATP-dependent RNA helicase dbp2</fullName>
        <ecNumber>3.6.4.13</ecNumber>
    </recommendedName>
</protein>
<evidence type="ECO:0000250" key="1"/>
<evidence type="ECO:0000255" key="2">
    <source>
        <dbReference type="PROSITE-ProRule" id="PRU00541"/>
    </source>
</evidence>
<evidence type="ECO:0000255" key="3">
    <source>
        <dbReference type="PROSITE-ProRule" id="PRU00542"/>
    </source>
</evidence>
<evidence type="ECO:0000256" key="4">
    <source>
        <dbReference type="SAM" id="MobiDB-lite"/>
    </source>
</evidence>
<evidence type="ECO:0000305" key="5"/>
<name>DBP2_ASPCL</name>
<accession>A1C6C4</accession>
<comment type="function">
    <text evidence="1">ATP-dependent RNA helicase involved nonsense-mediated mRNA decay and ribosome biogenesis through rRNA processing.</text>
</comment>
<comment type="catalytic activity">
    <reaction>
        <text>ATP + H2O = ADP + phosphate + H(+)</text>
        <dbReference type="Rhea" id="RHEA:13065"/>
        <dbReference type="ChEBI" id="CHEBI:15377"/>
        <dbReference type="ChEBI" id="CHEBI:15378"/>
        <dbReference type="ChEBI" id="CHEBI:30616"/>
        <dbReference type="ChEBI" id="CHEBI:43474"/>
        <dbReference type="ChEBI" id="CHEBI:456216"/>
        <dbReference type="EC" id="3.6.4.13"/>
    </reaction>
</comment>
<comment type="subunit">
    <text evidence="1">Associates with polysomes.</text>
</comment>
<comment type="subcellular location">
    <subcellularLocation>
        <location evidence="1">Cytoplasm</location>
    </subcellularLocation>
    <subcellularLocation>
        <location evidence="1">Nucleus</location>
    </subcellularLocation>
</comment>
<comment type="domain">
    <text>The Q motif is unique to and characteristic of the DEAD box family of RNA helicases and controls ATP binding and hydrolysis.</text>
</comment>
<comment type="similarity">
    <text evidence="5">Belongs to the DEAD box helicase family. DDX5/DBP2 subfamily.</text>
</comment>
<keyword id="KW-0067">ATP-binding</keyword>
<keyword id="KW-0963">Cytoplasm</keyword>
<keyword id="KW-0347">Helicase</keyword>
<keyword id="KW-0378">Hydrolase</keyword>
<keyword id="KW-0866">Nonsense-mediated mRNA decay</keyword>
<keyword id="KW-0547">Nucleotide-binding</keyword>
<keyword id="KW-0539">Nucleus</keyword>
<keyword id="KW-1185">Reference proteome</keyword>
<keyword id="KW-0690">Ribosome biogenesis</keyword>
<keyword id="KW-0694">RNA-binding</keyword>
<keyword id="KW-0698">rRNA processing</keyword>
<dbReference type="EC" id="3.6.4.13"/>
<dbReference type="EMBL" id="DS027045">
    <property type="protein sequence ID" value="EAW13945.1"/>
    <property type="molecule type" value="Genomic_DNA"/>
</dbReference>
<dbReference type="RefSeq" id="XP_001275371.1">
    <property type="nucleotide sequence ID" value="XM_001275370.1"/>
</dbReference>
<dbReference type="SMR" id="A1C6C4"/>
<dbReference type="STRING" id="344612.A1C6C4"/>
<dbReference type="EnsemblFungi" id="EAW13945">
    <property type="protein sequence ID" value="EAW13945"/>
    <property type="gene ID" value="ACLA_069760"/>
</dbReference>
<dbReference type="GeneID" id="4707597"/>
<dbReference type="KEGG" id="act:ACLA_069760"/>
<dbReference type="VEuPathDB" id="FungiDB:ACLA_069760"/>
<dbReference type="eggNOG" id="KOG0331">
    <property type="taxonomic scope" value="Eukaryota"/>
</dbReference>
<dbReference type="HOGENOM" id="CLU_003041_16_9_1"/>
<dbReference type="OMA" id="STMPKFE"/>
<dbReference type="OrthoDB" id="196131at2759"/>
<dbReference type="Proteomes" id="UP000006701">
    <property type="component" value="Unassembled WGS sequence"/>
</dbReference>
<dbReference type="GO" id="GO:0005737">
    <property type="term" value="C:cytoplasm"/>
    <property type="evidence" value="ECO:0007669"/>
    <property type="project" value="UniProtKB-SubCell"/>
</dbReference>
<dbReference type="GO" id="GO:0005634">
    <property type="term" value="C:nucleus"/>
    <property type="evidence" value="ECO:0007669"/>
    <property type="project" value="UniProtKB-SubCell"/>
</dbReference>
<dbReference type="GO" id="GO:0005524">
    <property type="term" value="F:ATP binding"/>
    <property type="evidence" value="ECO:0007669"/>
    <property type="project" value="UniProtKB-KW"/>
</dbReference>
<dbReference type="GO" id="GO:0016887">
    <property type="term" value="F:ATP hydrolysis activity"/>
    <property type="evidence" value="ECO:0007669"/>
    <property type="project" value="RHEA"/>
</dbReference>
<dbReference type="GO" id="GO:0003723">
    <property type="term" value="F:RNA binding"/>
    <property type="evidence" value="ECO:0007669"/>
    <property type="project" value="UniProtKB-KW"/>
</dbReference>
<dbReference type="GO" id="GO:0003724">
    <property type="term" value="F:RNA helicase activity"/>
    <property type="evidence" value="ECO:0007669"/>
    <property type="project" value="UniProtKB-EC"/>
</dbReference>
<dbReference type="GO" id="GO:0000184">
    <property type="term" value="P:nuclear-transcribed mRNA catabolic process, nonsense-mediated decay"/>
    <property type="evidence" value="ECO:0007669"/>
    <property type="project" value="UniProtKB-KW"/>
</dbReference>
<dbReference type="GO" id="GO:0006364">
    <property type="term" value="P:rRNA processing"/>
    <property type="evidence" value="ECO:0007669"/>
    <property type="project" value="UniProtKB-KW"/>
</dbReference>
<dbReference type="CDD" id="cd17966">
    <property type="entry name" value="DEADc_DDX5_DDX17"/>
    <property type="match status" value="1"/>
</dbReference>
<dbReference type="CDD" id="cd18787">
    <property type="entry name" value="SF2_C_DEAD"/>
    <property type="match status" value="1"/>
</dbReference>
<dbReference type="FunFam" id="3.40.50.300:FF:000008">
    <property type="entry name" value="ATP-dependent RNA helicase RhlB"/>
    <property type="match status" value="1"/>
</dbReference>
<dbReference type="FunFam" id="3.40.50.300:FF:000079">
    <property type="entry name" value="probable ATP-dependent RNA helicase DDX17"/>
    <property type="match status" value="1"/>
</dbReference>
<dbReference type="Gene3D" id="3.40.50.300">
    <property type="entry name" value="P-loop containing nucleotide triphosphate hydrolases"/>
    <property type="match status" value="2"/>
</dbReference>
<dbReference type="InterPro" id="IPR011545">
    <property type="entry name" value="DEAD/DEAH_box_helicase_dom"/>
</dbReference>
<dbReference type="InterPro" id="IPR014001">
    <property type="entry name" value="Helicase_ATP-bd"/>
</dbReference>
<dbReference type="InterPro" id="IPR001650">
    <property type="entry name" value="Helicase_C-like"/>
</dbReference>
<dbReference type="InterPro" id="IPR027417">
    <property type="entry name" value="P-loop_NTPase"/>
</dbReference>
<dbReference type="InterPro" id="IPR000629">
    <property type="entry name" value="RNA-helicase_DEAD-box_CS"/>
</dbReference>
<dbReference type="InterPro" id="IPR014014">
    <property type="entry name" value="RNA_helicase_DEAD_Q_motif"/>
</dbReference>
<dbReference type="PANTHER" id="PTHR47958">
    <property type="entry name" value="ATP-DEPENDENT RNA HELICASE DBP3"/>
    <property type="match status" value="1"/>
</dbReference>
<dbReference type="Pfam" id="PF00270">
    <property type="entry name" value="DEAD"/>
    <property type="match status" value="1"/>
</dbReference>
<dbReference type="Pfam" id="PF00271">
    <property type="entry name" value="Helicase_C"/>
    <property type="match status" value="1"/>
</dbReference>
<dbReference type="SMART" id="SM00487">
    <property type="entry name" value="DEXDc"/>
    <property type="match status" value="1"/>
</dbReference>
<dbReference type="SMART" id="SM00490">
    <property type="entry name" value="HELICc"/>
    <property type="match status" value="1"/>
</dbReference>
<dbReference type="SUPFAM" id="SSF52540">
    <property type="entry name" value="P-loop containing nucleoside triphosphate hydrolases"/>
    <property type="match status" value="1"/>
</dbReference>
<dbReference type="PROSITE" id="PS00039">
    <property type="entry name" value="DEAD_ATP_HELICASE"/>
    <property type="match status" value="1"/>
</dbReference>
<dbReference type="PROSITE" id="PS51192">
    <property type="entry name" value="HELICASE_ATP_BIND_1"/>
    <property type="match status" value="1"/>
</dbReference>
<dbReference type="PROSITE" id="PS51194">
    <property type="entry name" value="HELICASE_CTER"/>
    <property type="match status" value="1"/>
</dbReference>
<dbReference type="PROSITE" id="PS51195">
    <property type="entry name" value="Q_MOTIF"/>
    <property type="match status" value="1"/>
</dbReference>
<organism>
    <name type="scientific">Aspergillus clavatus (strain ATCC 1007 / CBS 513.65 / DSM 816 / NCTC 3887 / NRRL 1 / QM 1276 / 107)</name>
    <dbReference type="NCBI Taxonomy" id="344612"/>
    <lineage>
        <taxon>Eukaryota</taxon>
        <taxon>Fungi</taxon>
        <taxon>Dikarya</taxon>
        <taxon>Ascomycota</taxon>
        <taxon>Pezizomycotina</taxon>
        <taxon>Eurotiomycetes</taxon>
        <taxon>Eurotiomycetidae</taxon>
        <taxon>Eurotiales</taxon>
        <taxon>Aspergillaceae</taxon>
        <taxon>Aspergillus</taxon>
        <taxon>Aspergillus subgen. Fumigati</taxon>
    </lineage>
</organism>
<sequence length="549" mass="59941">MSSYGGGYQRDSYRSRGGQGGYSNGNSYGNGGGGGGGYGGGGYGGGGFGGGGYGRGGGAAGGDRMSNLGAGLKKQEWDLETLPKFEKSFYKEHPDVTARSQREVDEFRQEHKMTVQGKNVPRPVETFDEAGFPQYVLSEVKSQGFERPTAIQSQGWPMALSGRDVVGIAETGSGKTLTYCLPAIVHINAQPLLAPGDGPIVLVLAPTRELAVQIQTEITKFGKSSRIRNTCVYGGVPKGPQIRDLSRGVEVCIATPGRLIDMLEAGRTNLRRVTYLVLDEADRMLDMGFEPQIRKIISQIRPDRQTCMWSATWPKEVRQLASDFLNDYIQVNIGSMDLSANHRITQIVEVVSDFEKRDKMIKHLEKIMEDRSNKILIFTGTKRIADEITRFLRQDGWPALSIHGDKQQQERDWVLNEFKAGKSPIMVATDVASRGIDVRDITHVLNYDYPNNSEDYIHRIGRTGRAGAKGTAITFFTTDNSKQARDLVTILTEAKQQIDPRLAEMVRYGGGGGHGHGGYGRWGGRGGGRGRGGGSTASNAAPLGNNRRW</sequence>
<reference key="1">
    <citation type="journal article" date="2008" name="PLoS Genet.">
        <title>Genomic islands in the pathogenic filamentous fungus Aspergillus fumigatus.</title>
        <authorList>
            <person name="Fedorova N.D."/>
            <person name="Khaldi N."/>
            <person name="Joardar V.S."/>
            <person name="Maiti R."/>
            <person name="Amedeo P."/>
            <person name="Anderson M.J."/>
            <person name="Crabtree J."/>
            <person name="Silva J.C."/>
            <person name="Badger J.H."/>
            <person name="Albarraq A."/>
            <person name="Angiuoli S."/>
            <person name="Bussey H."/>
            <person name="Bowyer P."/>
            <person name="Cotty P.J."/>
            <person name="Dyer P.S."/>
            <person name="Egan A."/>
            <person name="Galens K."/>
            <person name="Fraser-Liggett C.M."/>
            <person name="Haas B.J."/>
            <person name="Inman J.M."/>
            <person name="Kent R."/>
            <person name="Lemieux S."/>
            <person name="Malavazi I."/>
            <person name="Orvis J."/>
            <person name="Roemer T."/>
            <person name="Ronning C.M."/>
            <person name="Sundaram J.P."/>
            <person name="Sutton G."/>
            <person name="Turner G."/>
            <person name="Venter J.C."/>
            <person name="White O.R."/>
            <person name="Whitty B.R."/>
            <person name="Youngman P."/>
            <person name="Wolfe K.H."/>
            <person name="Goldman G.H."/>
            <person name="Wortman J.R."/>
            <person name="Jiang B."/>
            <person name="Denning D.W."/>
            <person name="Nierman W.C."/>
        </authorList>
    </citation>
    <scope>NUCLEOTIDE SEQUENCE [LARGE SCALE GENOMIC DNA]</scope>
    <source>
        <strain>ATCC 1007 / CBS 513.65 / DSM 816 / NCTC 3887 / NRRL 1 / QM 1276 / 107</strain>
    </source>
</reference>
<gene>
    <name type="primary">dbp2</name>
    <name type="ORF">ACLA_069760</name>
</gene>
<feature type="chain" id="PRO_0000281692" description="ATP-dependent RNA helicase dbp2">
    <location>
        <begin position="1"/>
        <end position="549"/>
    </location>
</feature>
<feature type="domain" description="Helicase ATP-binding" evidence="2">
    <location>
        <begin position="156"/>
        <end position="331"/>
    </location>
</feature>
<feature type="domain" description="Helicase C-terminal" evidence="3">
    <location>
        <begin position="359"/>
        <end position="506"/>
    </location>
</feature>
<feature type="region of interest" description="Disordered" evidence="4">
    <location>
        <begin position="1"/>
        <end position="41"/>
    </location>
</feature>
<feature type="region of interest" description="Disordered" evidence="4">
    <location>
        <begin position="523"/>
        <end position="549"/>
    </location>
</feature>
<feature type="short sequence motif" description="Q motif">
    <location>
        <begin position="125"/>
        <end position="153"/>
    </location>
</feature>
<feature type="short sequence motif" description="DEAD box">
    <location>
        <begin position="279"/>
        <end position="282"/>
    </location>
</feature>
<feature type="compositionally biased region" description="Gly residues" evidence="4">
    <location>
        <begin position="17"/>
        <end position="41"/>
    </location>
</feature>
<feature type="compositionally biased region" description="Gly residues" evidence="4">
    <location>
        <begin position="523"/>
        <end position="535"/>
    </location>
</feature>
<feature type="binding site" evidence="2">
    <location>
        <begin position="169"/>
        <end position="176"/>
    </location>
    <ligand>
        <name>ATP</name>
        <dbReference type="ChEBI" id="CHEBI:30616"/>
    </ligand>
</feature>
<proteinExistence type="inferred from homology"/>